<name>GASR_MOUSE</name>
<evidence type="ECO:0000250" key="1"/>
<evidence type="ECO:0000250" key="2">
    <source>
        <dbReference type="UniProtKB" id="P17124"/>
    </source>
</evidence>
<evidence type="ECO:0000255" key="3"/>
<evidence type="ECO:0000255" key="4">
    <source>
        <dbReference type="PROSITE-ProRule" id="PRU00521"/>
    </source>
</evidence>
<evidence type="ECO:0000256" key="5">
    <source>
        <dbReference type="SAM" id="MobiDB-lite"/>
    </source>
</evidence>
<accession>P56481</accession>
<proteinExistence type="evidence at transcript level"/>
<sequence length="453" mass="49172">MDLLKLNRSLQGPGPGSGSSLCRPGVSLLNSSSAGNLSCETPRIRGTGTRELELTIRITLYAVIFLMSVGGNVLIIVVLGLSRRLRTVTNAFLLSLAVSDLLLAVACMPFTLLPNLMGTFIFGTVICKAVSYLMGVSVSVSTLNLAAIALERYSAICRPLQARVWQTRSHAARVILATWLLSGLLMVPYPVYTVVQPVGPRILQCMHLWPSERVQQMWSVLLLILLFFIPGVVMAVAYGLISRELYLGLRFDGDNDSETQSRVRNQGGLPGGAAAPGPVHQNGGCRHVTSLTGEDSDGCYVQLPRSRLEMTTLTTPTTGPGPGPRPNQAKLLAKKRVVRMLLVIVLLFFVCWLPVYSANTWRAFDGPGARRALAGAPISFIHLLSYTSACANPLVYCFMHRRFRQACLDTCARCCPRPPRARPRPLPDEDPPTPSIASLSRLSYTTISTLGPG</sequence>
<keyword id="KW-1003">Cell membrane</keyword>
<keyword id="KW-1015">Disulfide bond</keyword>
<keyword id="KW-0297">G-protein coupled receptor</keyword>
<keyword id="KW-0325">Glycoprotein</keyword>
<keyword id="KW-0449">Lipoprotein</keyword>
<keyword id="KW-0472">Membrane</keyword>
<keyword id="KW-0564">Palmitate</keyword>
<keyword id="KW-0675">Receptor</keyword>
<keyword id="KW-1185">Reference proteome</keyword>
<keyword id="KW-0807">Transducer</keyword>
<keyword id="KW-0812">Transmembrane</keyword>
<keyword id="KW-1133">Transmembrane helix</keyword>
<feature type="chain" id="PRO_0000069475" description="Gastrin/cholecystokinin type B receptor">
    <location>
        <begin position="1"/>
        <end position="453"/>
    </location>
</feature>
<feature type="topological domain" description="Extracellular" evidence="3">
    <location>
        <begin position="1"/>
        <end position="57"/>
    </location>
</feature>
<feature type="transmembrane region" description="Helical; Name=1" evidence="3">
    <location>
        <begin position="58"/>
        <end position="79"/>
    </location>
</feature>
<feature type="topological domain" description="Cytoplasmic" evidence="3">
    <location>
        <begin position="80"/>
        <end position="87"/>
    </location>
</feature>
<feature type="transmembrane region" description="Helical; Name=2" evidence="3">
    <location>
        <begin position="88"/>
        <end position="109"/>
    </location>
</feature>
<feature type="topological domain" description="Extracellular" evidence="3">
    <location>
        <begin position="110"/>
        <end position="131"/>
    </location>
</feature>
<feature type="transmembrane region" description="Helical; Name=3" evidence="3">
    <location>
        <begin position="132"/>
        <end position="150"/>
    </location>
</feature>
<feature type="topological domain" description="Cytoplasmic" evidence="3">
    <location>
        <begin position="151"/>
        <end position="170"/>
    </location>
</feature>
<feature type="transmembrane region" description="Helical; Name=4" evidence="3">
    <location>
        <begin position="171"/>
        <end position="189"/>
    </location>
</feature>
<feature type="topological domain" description="Extracellular" evidence="3">
    <location>
        <begin position="190"/>
        <end position="219"/>
    </location>
</feature>
<feature type="transmembrane region" description="Helical; Name=5" evidence="3">
    <location>
        <begin position="220"/>
        <end position="242"/>
    </location>
</feature>
<feature type="topological domain" description="Cytoplasmic" evidence="3">
    <location>
        <begin position="243"/>
        <end position="339"/>
    </location>
</feature>
<feature type="transmembrane region" description="Helical; Name=6" evidence="3">
    <location>
        <begin position="340"/>
        <end position="361"/>
    </location>
</feature>
<feature type="topological domain" description="Extracellular" evidence="3">
    <location>
        <begin position="362"/>
        <end position="379"/>
    </location>
</feature>
<feature type="transmembrane region" description="Helical; Name=7" evidence="3">
    <location>
        <begin position="380"/>
        <end position="400"/>
    </location>
</feature>
<feature type="topological domain" description="Cytoplasmic" evidence="3">
    <location>
        <begin position="401"/>
        <end position="453"/>
    </location>
</feature>
<feature type="region of interest" description="Disordered" evidence="5">
    <location>
        <begin position="257"/>
        <end position="276"/>
    </location>
</feature>
<feature type="lipid moiety-binding region" description="S-palmitoyl cysteine" evidence="2">
    <location>
        <position position="414"/>
    </location>
</feature>
<feature type="glycosylation site" description="N-linked (GlcNAc...) asparagine" evidence="3">
    <location>
        <position position="7"/>
    </location>
</feature>
<feature type="glycosylation site" description="N-linked (GlcNAc...) asparagine" evidence="3">
    <location>
        <position position="30"/>
    </location>
</feature>
<feature type="glycosylation site" description="N-linked (GlcNAc...) asparagine" evidence="3">
    <location>
        <position position="36"/>
    </location>
</feature>
<feature type="disulfide bond" evidence="4">
    <location>
        <begin position="127"/>
        <end position="205"/>
    </location>
</feature>
<reference key="1">
    <citation type="submission" date="1997-08" db="EMBL/GenBank/DDBJ databases">
        <authorList>
            <person name="Kopin A.S."/>
        </authorList>
    </citation>
    <scope>NUCLEOTIDE SEQUENCE</scope>
</reference>
<reference key="2">
    <citation type="journal article" date="2000" name="Biochem. Biophys. Res. Commun.">
        <title>Structure and developmental expression of the mouse CCK-B receptor gene.</title>
        <authorList>
            <person name="Lay J.M."/>
            <person name="Jenkins C."/>
            <person name="Friis-Hansen L."/>
            <person name="Samuelson L.C."/>
        </authorList>
    </citation>
    <scope>NUCLEOTIDE SEQUENCE [GENOMIC DNA]</scope>
    <source>
        <strain>129/SvJ</strain>
    </source>
</reference>
<reference key="3">
    <citation type="journal article" date="2005" name="Science">
        <title>The transcriptional landscape of the mammalian genome.</title>
        <authorList>
            <person name="Carninci P."/>
            <person name="Kasukawa T."/>
            <person name="Katayama S."/>
            <person name="Gough J."/>
            <person name="Frith M.C."/>
            <person name="Maeda N."/>
            <person name="Oyama R."/>
            <person name="Ravasi T."/>
            <person name="Lenhard B."/>
            <person name="Wells C."/>
            <person name="Kodzius R."/>
            <person name="Shimokawa K."/>
            <person name="Bajic V.B."/>
            <person name="Brenner S.E."/>
            <person name="Batalov S."/>
            <person name="Forrest A.R."/>
            <person name="Zavolan M."/>
            <person name="Davis M.J."/>
            <person name="Wilming L.G."/>
            <person name="Aidinis V."/>
            <person name="Allen J.E."/>
            <person name="Ambesi-Impiombato A."/>
            <person name="Apweiler R."/>
            <person name="Aturaliya R.N."/>
            <person name="Bailey T.L."/>
            <person name="Bansal M."/>
            <person name="Baxter L."/>
            <person name="Beisel K.W."/>
            <person name="Bersano T."/>
            <person name="Bono H."/>
            <person name="Chalk A.M."/>
            <person name="Chiu K.P."/>
            <person name="Choudhary V."/>
            <person name="Christoffels A."/>
            <person name="Clutterbuck D.R."/>
            <person name="Crowe M.L."/>
            <person name="Dalla E."/>
            <person name="Dalrymple B.P."/>
            <person name="de Bono B."/>
            <person name="Della Gatta G."/>
            <person name="di Bernardo D."/>
            <person name="Down T."/>
            <person name="Engstrom P."/>
            <person name="Fagiolini M."/>
            <person name="Faulkner G."/>
            <person name="Fletcher C.F."/>
            <person name="Fukushima T."/>
            <person name="Furuno M."/>
            <person name="Futaki S."/>
            <person name="Gariboldi M."/>
            <person name="Georgii-Hemming P."/>
            <person name="Gingeras T.R."/>
            <person name="Gojobori T."/>
            <person name="Green R.E."/>
            <person name="Gustincich S."/>
            <person name="Harbers M."/>
            <person name="Hayashi Y."/>
            <person name="Hensch T.K."/>
            <person name="Hirokawa N."/>
            <person name="Hill D."/>
            <person name="Huminiecki L."/>
            <person name="Iacono M."/>
            <person name="Ikeo K."/>
            <person name="Iwama A."/>
            <person name="Ishikawa T."/>
            <person name="Jakt M."/>
            <person name="Kanapin A."/>
            <person name="Katoh M."/>
            <person name="Kawasawa Y."/>
            <person name="Kelso J."/>
            <person name="Kitamura H."/>
            <person name="Kitano H."/>
            <person name="Kollias G."/>
            <person name="Krishnan S.P."/>
            <person name="Kruger A."/>
            <person name="Kummerfeld S.K."/>
            <person name="Kurochkin I.V."/>
            <person name="Lareau L.F."/>
            <person name="Lazarevic D."/>
            <person name="Lipovich L."/>
            <person name="Liu J."/>
            <person name="Liuni S."/>
            <person name="McWilliam S."/>
            <person name="Madan Babu M."/>
            <person name="Madera M."/>
            <person name="Marchionni L."/>
            <person name="Matsuda H."/>
            <person name="Matsuzawa S."/>
            <person name="Miki H."/>
            <person name="Mignone F."/>
            <person name="Miyake S."/>
            <person name="Morris K."/>
            <person name="Mottagui-Tabar S."/>
            <person name="Mulder N."/>
            <person name="Nakano N."/>
            <person name="Nakauchi H."/>
            <person name="Ng P."/>
            <person name="Nilsson R."/>
            <person name="Nishiguchi S."/>
            <person name="Nishikawa S."/>
            <person name="Nori F."/>
            <person name="Ohara O."/>
            <person name="Okazaki Y."/>
            <person name="Orlando V."/>
            <person name="Pang K.C."/>
            <person name="Pavan W.J."/>
            <person name="Pavesi G."/>
            <person name="Pesole G."/>
            <person name="Petrovsky N."/>
            <person name="Piazza S."/>
            <person name="Reed J."/>
            <person name="Reid J.F."/>
            <person name="Ring B.Z."/>
            <person name="Ringwald M."/>
            <person name="Rost B."/>
            <person name="Ruan Y."/>
            <person name="Salzberg S.L."/>
            <person name="Sandelin A."/>
            <person name="Schneider C."/>
            <person name="Schoenbach C."/>
            <person name="Sekiguchi K."/>
            <person name="Semple C.A."/>
            <person name="Seno S."/>
            <person name="Sessa L."/>
            <person name="Sheng Y."/>
            <person name="Shibata Y."/>
            <person name="Shimada H."/>
            <person name="Shimada K."/>
            <person name="Silva D."/>
            <person name="Sinclair B."/>
            <person name="Sperling S."/>
            <person name="Stupka E."/>
            <person name="Sugiura K."/>
            <person name="Sultana R."/>
            <person name="Takenaka Y."/>
            <person name="Taki K."/>
            <person name="Tammoja K."/>
            <person name="Tan S.L."/>
            <person name="Tang S."/>
            <person name="Taylor M.S."/>
            <person name="Tegner J."/>
            <person name="Teichmann S.A."/>
            <person name="Ueda H.R."/>
            <person name="van Nimwegen E."/>
            <person name="Verardo R."/>
            <person name="Wei C.L."/>
            <person name="Yagi K."/>
            <person name="Yamanishi H."/>
            <person name="Zabarovsky E."/>
            <person name="Zhu S."/>
            <person name="Zimmer A."/>
            <person name="Hide W."/>
            <person name="Bult C."/>
            <person name="Grimmond S.M."/>
            <person name="Teasdale R.D."/>
            <person name="Liu E.T."/>
            <person name="Brusic V."/>
            <person name="Quackenbush J."/>
            <person name="Wahlestedt C."/>
            <person name="Mattick J.S."/>
            <person name="Hume D.A."/>
            <person name="Kai C."/>
            <person name="Sasaki D."/>
            <person name="Tomaru Y."/>
            <person name="Fukuda S."/>
            <person name="Kanamori-Katayama M."/>
            <person name="Suzuki M."/>
            <person name="Aoki J."/>
            <person name="Arakawa T."/>
            <person name="Iida J."/>
            <person name="Imamura K."/>
            <person name="Itoh M."/>
            <person name="Kato T."/>
            <person name="Kawaji H."/>
            <person name="Kawagashira N."/>
            <person name="Kawashima T."/>
            <person name="Kojima M."/>
            <person name="Kondo S."/>
            <person name="Konno H."/>
            <person name="Nakano K."/>
            <person name="Ninomiya N."/>
            <person name="Nishio T."/>
            <person name="Okada M."/>
            <person name="Plessy C."/>
            <person name="Shibata K."/>
            <person name="Shiraki T."/>
            <person name="Suzuki S."/>
            <person name="Tagami M."/>
            <person name="Waki K."/>
            <person name="Watahiki A."/>
            <person name="Okamura-Oho Y."/>
            <person name="Suzuki H."/>
            <person name="Kawai J."/>
            <person name="Hayashizaki Y."/>
        </authorList>
    </citation>
    <scope>NUCLEOTIDE SEQUENCE [LARGE SCALE MRNA]</scope>
    <source>
        <strain>C57BL/6J</strain>
        <tissue>Brain</tissue>
    </source>
</reference>
<dbReference type="EMBL" id="AF019371">
    <property type="protein sequence ID" value="AAB71863.1"/>
    <property type="molecule type" value="mRNA"/>
</dbReference>
<dbReference type="EMBL" id="AF264178">
    <property type="protein sequence ID" value="AAG09801.1"/>
    <property type="molecule type" value="Genomic_DNA"/>
</dbReference>
<dbReference type="EMBL" id="AF264177">
    <property type="protein sequence ID" value="AAG09801.1"/>
    <property type="status" value="JOINED"/>
    <property type="molecule type" value="Genomic_DNA"/>
</dbReference>
<dbReference type="EMBL" id="AK028325">
    <property type="protein sequence ID" value="BAC25881.1"/>
    <property type="molecule type" value="mRNA"/>
</dbReference>
<dbReference type="CCDS" id="CCDS21651.1"/>
<dbReference type="RefSeq" id="NP_031653.1">
    <property type="nucleotide sequence ID" value="NM_007627.6"/>
</dbReference>
<dbReference type="SMR" id="P56481"/>
<dbReference type="FunCoup" id="P56481">
    <property type="interactions" value="971"/>
</dbReference>
<dbReference type="STRING" id="10090.ENSMUSP00000033189"/>
<dbReference type="BindingDB" id="P56481"/>
<dbReference type="ChEMBL" id="CHEMBL2854"/>
<dbReference type="DrugCentral" id="P56481"/>
<dbReference type="GuidetoPHARMACOLOGY" id="77"/>
<dbReference type="GlyCosmos" id="P56481">
    <property type="glycosylation" value="3 sites, No reported glycans"/>
</dbReference>
<dbReference type="GlyGen" id="P56481">
    <property type="glycosylation" value="4 sites"/>
</dbReference>
<dbReference type="iPTMnet" id="P56481"/>
<dbReference type="PhosphoSitePlus" id="P56481"/>
<dbReference type="PaxDb" id="10090-ENSMUSP00000033189"/>
<dbReference type="ProteomicsDB" id="267422"/>
<dbReference type="ABCD" id="P56481">
    <property type="antibodies" value="7 sequenced antibodies"/>
</dbReference>
<dbReference type="Antibodypedia" id="11193">
    <property type="antibodies" value="354 antibodies from 37 providers"/>
</dbReference>
<dbReference type="DNASU" id="12426"/>
<dbReference type="Ensembl" id="ENSMUST00000033189.6">
    <property type="protein sequence ID" value="ENSMUSP00000033189.4"/>
    <property type="gene ID" value="ENSMUSG00000030898.16"/>
</dbReference>
<dbReference type="GeneID" id="12426"/>
<dbReference type="KEGG" id="mmu:12426"/>
<dbReference type="UCSC" id="uc009iyd.1">
    <property type="organism name" value="mouse"/>
</dbReference>
<dbReference type="AGR" id="MGI:99479"/>
<dbReference type="CTD" id="887"/>
<dbReference type="MGI" id="MGI:99479">
    <property type="gene designation" value="Cckbr"/>
</dbReference>
<dbReference type="VEuPathDB" id="HostDB:ENSMUSG00000030898"/>
<dbReference type="eggNOG" id="KOG3656">
    <property type="taxonomic scope" value="Eukaryota"/>
</dbReference>
<dbReference type="GeneTree" id="ENSGT01130000278338"/>
<dbReference type="HOGENOM" id="CLU_009579_6_3_1"/>
<dbReference type="InParanoid" id="P56481"/>
<dbReference type="OMA" id="GCYVNLL"/>
<dbReference type="OrthoDB" id="5987936at2759"/>
<dbReference type="PhylomeDB" id="P56481"/>
<dbReference type="TreeFam" id="TF315303"/>
<dbReference type="Reactome" id="R-MMU-375276">
    <property type="pathway name" value="Peptide ligand-binding receptors"/>
</dbReference>
<dbReference type="Reactome" id="R-MMU-416476">
    <property type="pathway name" value="G alpha (q) signalling events"/>
</dbReference>
<dbReference type="Reactome" id="R-MMU-881907">
    <property type="pathway name" value="Gastrin-CREB signalling pathway via PKC and MAPK"/>
</dbReference>
<dbReference type="BioGRID-ORCS" id="12426">
    <property type="hits" value="1 hit in 77 CRISPR screens"/>
</dbReference>
<dbReference type="PRO" id="PR:P56481"/>
<dbReference type="Proteomes" id="UP000000589">
    <property type="component" value="Chromosome 7"/>
</dbReference>
<dbReference type="RNAct" id="P56481">
    <property type="molecule type" value="protein"/>
</dbReference>
<dbReference type="Bgee" id="ENSMUSG00000030898">
    <property type="expression patterns" value="Expressed in retrosplenial region and 56 other cell types or tissues"/>
</dbReference>
<dbReference type="ExpressionAtlas" id="P56481">
    <property type="expression patterns" value="baseline and differential"/>
</dbReference>
<dbReference type="GO" id="GO:0043231">
    <property type="term" value="C:intracellular membrane-bounded organelle"/>
    <property type="evidence" value="ECO:0007669"/>
    <property type="project" value="Ensembl"/>
</dbReference>
<dbReference type="GO" id="GO:0016020">
    <property type="term" value="C:membrane"/>
    <property type="evidence" value="ECO:0000314"/>
    <property type="project" value="MGI"/>
</dbReference>
<dbReference type="GO" id="GO:0005886">
    <property type="term" value="C:plasma membrane"/>
    <property type="evidence" value="ECO:0007669"/>
    <property type="project" value="UniProtKB-SubCell"/>
</dbReference>
<dbReference type="GO" id="GO:0004951">
    <property type="term" value="F:cholecystokinin receptor activity"/>
    <property type="evidence" value="ECO:0007669"/>
    <property type="project" value="Ensembl"/>
</dbReference>
<dbReference type="GO" id="GO:0015054">
    <property type="term" value="F:gastrin receptor activity"/>
    <property type="evidence" value="ECO:0000250"/>
    <property type="project" value="UniProtKB"/>
</dbReference>
<dbReference type="GO" id="GO:0017046">
    <property type="term" value="F:peptide hormone binding"/>
    <property type="evidence" value="ECO:0007669"/>
    <property type="project" value="Ensembl"/>
</dbReference>
<dbReference type="GO" id="GO:0031741">
    <property type="term" value="F:type B gastrin/cholecystokinin receptor binding"/>
    <property type="evidence" value="ECO:0007669"/>
    <property type="project" value="Ensembl"/>
</dbReference>
<dbReference type="GO" id="GO:0048565">
    <property type="term" value="P:digestive tract development"/>
    <property type="evidence" value="ECO:0000315"/>
    <property type="project" value="MGI"/>
</dbReference>
<dbReference type="GO" id="GO:0001696">
    <property type="term" value="P:gastric acid secretion"/>
    <property type="evidence" value="ECO:0000315"/>
    <property type="project" value="MGI"/>
</dbReference>
<dbReference type="GO" id="GO:0048732">
    <property type="term" value="P:gland development"/>
    <property type="evidence" value="ECO:0000315"/>
    <property type="project" value="MGI"/>
</dbReference>
<dbReference type="GO" id="GO:0045851">
    <property type="term" value="P:pH reduction"/>
    <property type="evidence" value="ECO:0000315"/>
    <property type="project" value="MGI"/>
</dbReference>
<dbReference type="GO" id="GO:0007200">
    <property type="term" value="P:phospholipase C-activating G protein-coupled receptor signaling pathway"/>
    <property type="evidence" value="ECO:0007669"/>
    <property type="project" value="Ensembl"/>
</dbReference>
<dbReference type="GO" id="GO:0008284">
    <property type="term" value="P:positive regulation of cell population proliferation"/>
    <property type="evidence" value="ECO:0000250"/>
    <property type="project" value="UniProtKB"/>
</dbReference>
<dbReference type="GO" id="GO:0007204">
    <property type="term" value="P:positive regulation of cytosolic calcium ion concentration"/>
    <property type="evidence" value="ECO:0000250"/>
    <property type="project" value="UniProtKB"/>
</dbReference>
<dbReference type="Gene3D" id="1.20.1070.10">
    <property type="entry name" value="Rhodopsin 7-helix transmembrane proteins"/>
    <property type="match status" value="1"/>
</dbReference>
<dbReference type="InterPro" id="IPR009126">
    <property type="entry name" value="Cholcskin_rcpt"/>
</dbReference>
<dbReference type="InterPro" id="IPR000314">
    <property type="entry name" value="Gastrin_rcpt"/>
</dbReference>
<dbReference type="InterPro" id="IPR000276">
    <property type="entry name" value="GPCR_Rhodpsn"/>
</dbReference>
<dbReference type="InterPro" id="IPR017452">
    <property type="entry name" value="GPCR_Rhodpsn_7TM"/>
</dbReference>
<dbReference type="PANTHER" id="PTHR24243">
    <property type="entry name" value="G-PROTEIN COUPLED RECEPTOR"/>
    <property type="match status" value="1"/>
</dbReference>
<dbReference type="PANTHER" id="PTHR24243:SF45">
    <property type="entry name" value="GASTRIN_CHOLECYSTOKININ TYPE B RECEPTOR"/>
    <property type="match status" value="1"/>
</dbReference>
<dbReference type="Pfam" id="PF00001">
    <property type="entry name" value="7tm_1"/>
    <property type="match status" value="1"/>
</dbReference>
<dbReference type="PRINTS" id="PR01822">
    <property type="entry name" value="CCYSTOKININR"/>
</dbReference>
<dbReference type="PRINTS" id="PR00527">
    <property type="entry name" value="GASTRINR"/>
</dbReference>
<dbReference type="PRINTS" id="PR00237">
    <property type="entry name" value="GPCRRHODOPSN"/>
</dbReference>
<dbReference type="SUPFAM" id="SSF81321">
    <property type="entry name" value="Family A G protein-coupled receptor-like"/>
    <property type="match status" value="1"/>
</dbReference>
<dbReference type="PROSITE" id="PS00237">
    <property type="entry name" value="G_PROTEIN_RECEP_F1_1"/>
    <property type="match status" value="1"/>
</dbReference>
<dbReference type="PROSITE" id="PS50262">
    <property type="entry name" value="G_PROTEIN_RECEP_F1_2"/>
    <property type="match status" value="1"/>
</dbReference>
<comment type="function">
    <text evidence="1">Receptor for gastrin and cholecystokinin. The CCK-B receptors occur throughout the central nervous system where they modulate anxiety, analgesia, arousal, and neuroleptic activity. This receptor mediates its action by association with G proteins that activate a phosphatidylinositol-calcium second messenger system (By similarity).</text>
</comment>
<comment type="subcellular location">
    <subcellularLocation>
        <location>Cell membrane</location>
        <topology>Multi-pass membrane protein</topology>
    </subcellularLocation>
</comment>
<comment type="similarity">
    <text evidence="4">Belongs to the G-protein coupled receptor 1 family.</text>
</comment>
<organism>
    <name type="scientific">Mus musculus</name>
    <name type="common">Mouse</name>
    <dbReference type="NCBI Taxonomy" id="10090"/>
    <lineage>
        <taxon>Eukaryota</taxon>
        <taxon>Metazoa</taxon>
        <taxon>Chordata</taxon>
        <taxon>Craniata</taxon>
        <taxon>Vertebrata</taxon>
        <taxon>Euteleostomi</taxon>
        <taxon>Mammalia</taxon>
        <taxon>Eutheria</taxon>
        <taxon>Euarchontoglires</taxon>
        <taxon>Glires</taxon>
        <taxon>Rodentia</taxon>
        <taxon>Myomorpha</taxon>
        <taxon>Muroidea</taxon>
        <taxon>Muridae</taxon>
        <taxon>Murinae</taxon>
        <taxon>Mus</taxon>
        <taxon>Mus</taxon>
    </lineage>
</organism>
<protein>
    <recommendedName>
        <fullName>Gastrin/cholecystokinin type B receptor</fullName>
        <shortName>CCK-B receptor</shortName>
        <shortName>CCK-BR</shortName>
    </recommendedName>
    <alternativeName>
        <fullName>Cholecystokinin-2 receptor</fullName>
        <shortName>CCK2-R</shortName>
    </alternativeName>
</protein>
<gene>
    <name type="primary">Cckbr</name>
</gene>